<comment type="function">
    <text evidence="1">Involved in iron-sulfur (Fe-S) cluster assembly. May act as a regulator of Fe-S biogenesis.</text>
</comment>
<comment type="similarity">
    <text evidence="1">Belongs to the frataxin family.</text>
</comment>
<proteinExistence type="inferred from homology"/>
<evidence type="ECO:0000255" key="1">
    <source>
        <dbReference type="HAMAP-Rule" id="MF_00142"/>
    </source>
</evidence>
<protein>
    <recommendedName>
        <fullName evidence="1">Iron-sulfur cluster assembly protein CyaY</fullName>
    </recommendedName>
</protein>
<organism>
    <name type="scientific">Salmonella gallinarum (strain 287/91 / NCTC 13346)</name>
    <dbReference type="NCBI Taxonomy" id="550538"/>
    <lineage>
        <taxon>Bacteria</taxon>
        <taxon>Pseudomonadati</taxon>
        <taxon>Pseudomonadota</taxon>
        <taxon>Gammaproteobacteria</taxon>
        <taxon>Enterobacterales</taxon>
        <taxon>Enterobacteriaceae</taxon>
        <taxon>Salmonella</taxon>
    </lineage>
</organism>
<keyword id="KW-0408">Iron</keyword>
<keyword id="KW-0479">Metal-binding</keyword>
<dbReference type="EMBL" id="AM933173">
    <property type="protein sequence ID" value="CAR39296.1"/>
    <property type="molecule type" value="Genomic_DNA"/>
</dbReference>
<dbReference type="RefSeq" id="WP_000999925.1">
    <property type="nucleotide sequence ID" value="NC_011274.1"/>
</dbReference>
<dbReference type="SMR" id="B5RFQ2"/>
<dbReference type="KEGG" id="seg:SG3507"/>
<dbReference type="HOGENOM" id="CLU_080880_3_0_6"/>
<dbReference type="Proteomes" id="UP000008321">
    <property type="component" value="Chromosome"/>
</dbReference>
<dbReference type="GO" id="GO:0005829">
    <property type="term" value="C:cytosol"/>
    <property type="evidence" value="ECO:0007669"/>
    <property type="project" value="TreeGrafter"/>
</dbReference>
<dbReference type="GO" id="GO:0008199">
    <property type="term" value="F:ferric iron binding"/>
    <property type="evidence" value="ECO:0007669"/>
    <property type="project" value="InterPro"/>
</dbReference>
<dbReference type="GO" id="GO:0008198">
    <property type="term" value="F:ferrous iron binding"/>
    <property type="evidence" value="ECO:0007669"/>
    <property type="project" value="TreeGrafter"/>
</dbReference>
<dbReference type="GO" id="GO:0016226">
    <property type="term" value="P:iron-sulfur cluster assembly"/>
    <property type="evidence" value="ECO:0007669"/>
    <property type="project" value="UniProtKB-UniRule"/>
</dbReference>
<dbReference type="CDD" id="cd00503">
    <property type="entry name" value="Frataxin"/>
    <property type="match status" value="1"/>
</dbReference>
<dbReference type="FunFam" id="3.30.920.10:FF:000001">
    <property type="entry name" value="Iron-sulfur cluster assembly protein CyaY"/>
    <property type="match status" value="1"/>
</dbReference>
<dbReference type="Gene3D" id="3.30.920.10">
    <property type="entry name" value="Frataxin/CyaY"/>
    <property type="match status" value="1"/>
</dbReference>
<dbReference type="HAMAP" id="MF_00142">
    <property type="entry name" value="CyaY"/>
    <property type="match status" value="1"/>
</dbReference>
<dbReference type="InterPro" id="IPR047584">
    <property type="entry name" value="CyaY"/>
</dbReference>
<dbReference type="InterPro" id="IPR002908">
    <property type="entry name" value="Frataxin/CyaY"/>
</dbReference>
<dbReference type="InterPro" id="IPR036524">
    <property type="entry name" value="Frataxin/CyaY_sf"/>
</dbReference>
<dbReference type="InterPro" id="IPR020895">
    <property type="entry name" value="Frataxin_CS"/>
</dbReference>
<dbReference type="NCBIfam" id="TIGR03421">
    <property type="entry name" value="FeS_CyaY"/>
    <property type="match status" value="1"/>
</dbReference>
<dbReference type="PANTHER" id="PTHR16821">
    <property type="entry name" value="FRATAXIN"/>
    <property type="match status" value="1"/>
</dbReference>
<dbReference type="PANTHER" id="PTHR16821:SF2">
    <property type="entry name" value="FRATAXIN, MITOCHONDRIAL"/>
    <property type="match status" value="1"/>
</dbReference>
<dbReference type="Pfam" id="PF01491">
    <property type="entry name" value="Frataxin_Cyay"/>
    <property type="match status" value="1"/>
</dbReference>
<dbReference type="SMART" id="SM01219">
    <property type="entry name" value="Frataxin_Cyay"/>
    <property type="match status" value="1"/>
</dbReference>
<dbReference type="SUPFAM" id="SSF55387">
    <property type="entry name" value="Frataxin/Nqo15-like"/>
    <property type="match status" value="1"/>
</dbReference>
<dbReference type="PROSITE" id="PS01344">
    <property type="entry name" value="FRATAXIN_1"/>
    <property type="match status" value="1"/>
</dbReference>
<dbReference type="PROSITE" id="PS50810">
    <property type="entry name" value="FRATAXIN_2"/>
    <property type="match status" value="1"/>
</dbReference>
<reference key="1">
    <citation type="journal article" date="2008" name="Genome Res.">
        <title>Comparative genome analysis of Salmonella enteritidis PT4 and Salmonella gallinarum 287/91 provides insights into evolutionary and host adaptation pathways.</title>
        <authorList>
            <person name="Thomson N.R."/>
            <person name="Clayton D.J."/>
            <person name="Windhorst D."/>
            <person name="Vernikos G."/>
            <person name="Davidson S."/>
            <person name="Churcher C."/>
            <person name="Quail M.A."/>
            <person name="Stevens M."/>
            <person name="Jones M.A."/>
            <person name="Watson M."/>
            <person name="Barron A."/>
            <person name="Layton A."/>
            <person name="Pickard D."/>
            <person name="Kingsley R.A."/>
            <person name="Bignell A."/>
            <person name="Clark L."/>
            <person name="Harris B."/>
            <person name="Ormond D."/>
            <person name="Abdellah Z."/>
            <person name="Brooks K."/>
            <person name="Cherevach I."/>
            <person name="Chillingworth T."/>
            <person name="Woodward J."/>
            <person name="Norberczak H."/>
            <person name="Lord A."/>
            <person name="Arrowsmith C."/>
            <person name="Jagels K."/>
            <person name="Moule S."/>
            <person name="Mungall K."/>
            <person name="Saunders M."/>
            <person name="Whitehead S."/>
            <person name="Chabalgoity J.A."/>
            <person name="Maskell D."/>
            <person name="Humphreys T."/>
            <person name="Roberts M."/>
            <person name="Barrow P.A."/>
            <person name="Dougan G."/>
            <person name="Parkhill J."/>
        </authorList>
    </citation>
    <scope>NUCLEOTIDE SEQUENCE [LARGE SCALE GENOMIC DNA]</scope>
    <source>
        <strain>287/91 / NCTC 13346</strain>
    </source>
</reference>
<name>CYAY_SALG2</name>
<feature type="chain" id="PRO_1000096254" description="Iron-sulfur cluster assembly protein CyaY">
    <location>
        <begin position="1"/>
        <end position="106"/>
    </location>
</feature>
<gene>
    <name evidence="1" type="primary">cyaY</name>
    <name type="ordered locus">SG3507</name>
</gene>
<accession>B5RFQ2</accession>
<sequence>MNDSEFHRLADALWLTIEERLDNWDGDSDIDCEINGGVLTLSFENGSKIIINRQEPLHQVWLATKQGGYHFDLKGDEWVCDRSGETFWDLLEQAATQQAGEKVSFR</sequence>